<comment type="function">
    <text evidence="1">Part of the twin-arginine translocation (Tat) system that transports large folded proteins containing a characteristic twin-arginine motif in their signal peptide across membranes. Together with TatC, TatB is part of a receptor directly interacting with Tat signal peptides. TatB may form an oligomeric binding site that transiently accommodates folded Tat precursor proteins before their translocation.</text>
</comment>
<comment type="subunit">
    <text evidence="1">The Tat system comprises two distinct complexes: a TatABC complex, containing multiple copies of TatA, TatB and TatC subunits, and a separate TatA complex, containing only TatA subunits. Substrates initially bind to the TatABC complex, which probably triggers association of the separate TatA complex to form the active translocon.</text>
</comment>
<comment type="subcellular location">
    <subcellularLocation>
        <location evidence="1">Cell inner membrane</location>
        <topology evidence="1">Single-pass membrane protein</topology>
    </subcellularLocation>
</comment>
<comment type="similarity">
    <text evidence="1">Belongs to the TatB family.</text>
</comment>
<evidence type="ECO:0000255" key="1">
    <source>
        <dbReference type="HAMAP-Rule" id="MF_00237"/>
    </source>
</evidence>
<evidence type="ECO:0000256" key="2">
    <source>
        <dbReference type="SAM" id="MobiDB-lite"/>
    </source>
</evidence>
<name>TATB_YERE8</name>
<proteinExistence type="inferred from homology"/>
<feature type="chain" id="PRO_0000301251" description="Sec-independent protein translocase protein TatB">
    <location>
        <begin position="1"/>
        <end position="218"/>
    </location>
</feature>
<feature type="transmembrane region" description="Helical" evidence="1">
    <location>
        <begin position="1"/>
        <end position="21"/>
    </location>
</feature>
<feature type="region of interest" description="Disordered" evidence="2">
    <location>
        <begin position="126"/>
        <end position="145"/>
    </location>
</feature>
<feature type="region of interest" description="Disordered" evidence="2">
    <location>
        <begin position="174"/>
        <end position="218"/>
    </location>
</feature>
<feature type="compositionally biased region" description="Basic and acidic residues" evidence="2">
    <location>
        <begin position="199"/>
        <end position="218"/>
    </location>
</feature>
<organism>
    <name type="scientific">Yersinia enterocolitica serotype O:8 / biotype 1B (strain NCTC 13174 / 8081)</name>
    <dbReference type="NCBI Taxonomy" id="393305"/>
    <lineage>
        <taxon>Bacteria</taxon>
        <taxon>Pseudomonadati</taxon>
        <taxon>Pseudomonadota</taxon>
        <taxon>Gammaproteobacteria</taxon>
        <taxon>Enterobacterales</taxon>
        <taxon>Yersiniaceae</taxon>
        <taxon>Yersinia</taxon>
    </lineage>
</organism>
<dbReference type="EMBL" id="AM286415">
    <property type="protein sequence ID" value="CAL10394.1"/>
    <property type="molecule type" value="Genomic_DNA"/>
</dbReference>
<dbReference type="RefSeq" id="WP_011815372.1">
    <property type="nucleotide sequence ID" value="NC_008800.1"/>
</dbReference>
<dbReference type="RefSeq" id="YP_001004645.1">
    <property type="nucleotide sequence ID" value="NC_008800.1"/>
</dbReference>
<dbReference type="SMR" id="A1JIF6"/>
<dbReference type="KEGG" id="yen:YE0260"/>
<dbReference type="PATRIC" id="fig|393305.7.peg.352"/>
<dbReference type="eggNOG" id="COG1826">
    <property type="taxonomic scope" value="Bacteria"/>
</dbReference>
<dbReference type="HOGENOM" id="CLU_086034_1_0_6"/>
<dbReference type="OrthoDB" id="9816005at2"/>
<dbReference type="Proteomes" id="UP000000642">
    <property type="component" value="Chromosome"/>
</dbReference>
<dbReference type="GO" id="GO:0033281">
    <property type="term" value="C:TAT protein transport complex"/>
    <property type="evidence" value="ECO:0007669"/>
    <property type="project" value="UniProtKB-UniRule"/>
</dbReference>
<dbReference type="GO" id="GO:0008320">
    <property type="term" value="F:protein transmembrane transporter activity"/>
    <property type="evidence" value="ECO:0007669"/>
    <property type="project" value="UniProtKB-UniRule"/>
</dbReference>
<dbReference type="GO" id="GO:0043953">
    <property type="term" value="P:protein transport by the Tat complex"/>
    <property type="evidence" value="ECO:0007669"/>
    <property type="project" value="UniProtKB-UniRule"/>
</dbReference>
<dbReference type="Gene3D" id="1.20.5.3310">
    <property type="match status" value="1"/>
</dbReference>
<dbReference type="HAMAP" id="MF_00237">
    <property type="entry name" value="TatB"/>
    <property type="match status" value="1"/>
</dbReference>
<dbReference type="InterPro" id="IPR003369">
    <property type="entry name" value="TatA/B/E"/>
</dbReference>
<dbReference type="InterPro" id="IPR018448">
    <property type="entry name" value="TatB"/>
</dbReference>
<dbReference type="NCBIfam" id="TIGR01410">
    <property type="entry name" value="tatB"/>
    <property type="match status" value="1"/>
</dbReference>
<dbReference type="PANTHER" id="PTHR33162">
    <property type="entry name" value="SEC-INDEPENDENT PROTEIN TRANSLOCASE PROTEIN TATA, CHLOROPLASTIC"/>
    <property type="match status" value="1"/>
</dbReference>
<dbReference type="PANTHER" id="PTHR33162:SF1">
    <property type="entry name" value="SEC-INDEPENDENT PROTEIN TRANSLOCASE PROTEIN TATA, CHLOROPLASTIC"/>
    <property type="match status" value="1"/>
</dbReference>
<dbReference type="Pfam" id="PF02416">
    <property type="entry name" value="TatA_B_E"/>
    <property type="match status" value="1"/>
</dbReference>
<dbReference type="PRINTS" id="PR01506">
    <property type="entry name" value="TATBPROTEIN"/>
</dbReference>
<protein>
    <recommendedName>
        <fullName evidence="1">Sec-independent protein translocase protein TatB</fullName>
    </recommendedName>
</protein>
<gene>
    <name evidence="1" type="primary">tatB</name>
    <name type="ordered locus">YE0260</name>
</gene>
<keyword id="KW-0997">Cell inner membrane</keyword>
<keyword id="KW-1003">Cell membrane</keyword>
<keyword id="KW-0472">Membrane</keyword>
<keyword id="KW-0653">Protein transport</keyword>
<keyword id="KW-0811">Translocation</keyword>
<keyword id="KW-0812">Transmembrane</keyword>
<keyword id="KW-1133">Transmembrane helix</keyword>
<keyword id="KW-0813">Transport</keyword>
<reference key="1">
    <citation type="journal article" date="2006" name="PLoS Genet.">
        <title>The complete genome sequence and comparative genome analysis of the high pathogenicity Yersinia enterocolitica strain 8081.</title>
        <authorList>
            <person name="Thomson N.R."/>
            <person name="Howard S."/>
            <person name="Wren B.W."/>
            <person name="Holden M.T.G."/>
            <person name="Crossman L."/>
            <person name="Challis G.L."/>
            <person name="Churcher C."/>
            <person name="Mungall K."/>
            <person name="Brooks K."/>
            <person name="Chillingworth T."/>
            <person name="Feltwell T."/>
            <person name="Abdellah Z."/>
            <person name="Hauser H."/>
            <person name="Jagels K."/>
            <person name="Maddison M."/>
            <person name="Moule S."/>
            <person name="Sanders M."/>
            <person name="Whitehead S."/>
            <person name="Quail M.A."/>
            <person name="Dougan G."/>
            <person name="Parkhill J."/>
            <person name="Prentice M.B."/>
        </authorList>
    </citation>
    <scope>NUCLEOTIDE SEQUENCE [LARGE SCALE GENOMIC DNA]</scope>
    <source>
        <strain>NCTC 13174 / 8081</strain>
    </source>
</reference>
<accession>A1JIF6</accession>
<sequence>MFDIGFSELLLVLVIGLVVLGPERLPVAVRTVAGWIRTLRSLAATVQNELAQELKIQELQDSLKKAEEAGLQNLTPELKASMDELKEAAEALKRSYHSDIGLEAPHTIHNPLVTEPEAIHDGVTPAESATKAQASPQAPATDVDKTVTPTAVETASNNNEKPIVQVETFSASISSVDREPVPVTNTPVTKVQTATVDTHSTDSHGADQPRTHQPGGDR</sequence>